<proteinExistence type="evidence at protein level"/>
<reference key="1">
    <citation type="submission" date="2010-02" db="UniProtKB">
        <authorList>
            <person name="Zaharenko A.J."/>
            <person name="Ferreira W.A. Jr."/>
            <person name="Konno K."/>
            <person name="Richardson M."/>
            <person name="Freitas J.C."/>
        </authorList>
    </citation>
    <scope>PROTEIN SEQUENCE</scope>
    <scope>MASS SPECTROMETRY</scope>
    <scope>VARIANT ASP-17</scope>
    <source>
        <tissue>Venom</tissue>
    </source>
</reference>
<feature type="chain" id="PRO_0000392952" description="Toxin Bcg III 15.67">
    <location>
        <begin position="1"/>
        <end position="29" status="greater than"/>
    </location>
</feature>
<feature type="domain" description="EGF-like" evidence="2">
    <location>
        <begin position="2"/>
        <end position="29" status="greater than"/>
    </location>
</feature>
<feature type="disulfide bond" evidence="2">
    <location>
        <begin position="6"/>
        <end position="21"/>
    </location>
</feature>
<feature type="disulfide bond" evidence="2">
    <location>
        <begin position="15"/>
        <end status="unknown"/>
    </location>
</feature>
<feature type="sequence variant" evidence="3">
    <original>N</original>
    <variation>D</variation>
    <location>
        <position position="17"/>
    </location>
</feature>
<feature type="non-terminal residue">
    <location>
        <position position="29"/>
    </location>
</feature>
<keyword id="KW-0903">Direct protein sequencing</keyword>
<keyword id="KW-1015">Disulfide bond</keyword>
<keyword id="KW-0245">EGF-like domain</keyword>
<keyword id="KW-0166">Nematocyst</keyword>
<keyword id="KW-0964">Secreted</keyword>
<keyword id="KW-0800">Toxin</keyword>
<comment type="function">
    <text evidence="1">Has both toxic and EGF activity.</text>
</comment>
<comment type="subcellular location">
    <subcellularLocation>
        <location evidence="5">Secreted</location>
    </subcellularLocation>
    <subcellularLocation>
        <location evidence="5">Nematocyst</location>
    </subcellularLocation>
</comment>
<comment type="mass spectrometry" mass="5416.8" method="Electrospray" evidence="3"/>
<dbReference type="GO" id="GO:0005576">
    <property type="term" value="C:extracellular region"/>
    <property type="evidence" value="ECO:0007669"/>
    <property type="project" value="UniProtKB-SubCell"/>
</dbReference>
<dbReference type="GO" id="GO:0042151">
    <property type="term" value="C:nematocyst"/>
    <property type="evidence" value="ECO:0007669"/>
    <property type="project" value="UniProtKB-SubCell"/>
</dbReference>
<dbReference type="GO" id="GO:0090729">
    <property type="term" value="F:toxin activity"/>
    <property type="evidence" value="ECO:0007669"/>
    <property type="project" value="UniProtKB-KW"/>
</dbReference>
<sequence length="29" mass="3071">DQGTACTGEHAHSFCLNGGTCRHIQQLGE</sequence>
<protein>
    <recommendedName>
        <fullName evidence="4">Toxin Bcg III 15.67</fullName>
    </recommendedName>
</protein>
<name>TX156_BUNCN</name>
<evidence type="ECO:0000250" key="1">
    <source>
        <dbReference type="UniProtKB" id="Q76CA1"/>
    </source>
</evidence>
<evidence type="ECO:0000255" key="2">
    <source>
        <dbReference type="PROSITE-ProRule" id="PRU00076"/>
    </source>
</evidence>
<evidence type="ECO:0000269" key="3">
    <source ref="1"/>
</evidence>
<evidence type="ECO:0000303" key="4">
    <source ref="1"/>
</evidence>
<evidence type="ECO:0000305" key="5"/>
<accession>P86469</accession>
<organism>
    <name type="scientific">Bunodosoma cangicum</name>
    <name type="common">Sea anemone</name>
    <dbReference type="NCBI Taxonomy" id="138296"/>
    <lineage>
        <taxon>Eukaryota</taxon>
        <taxon>Metazoa</taxon>
        <taxon>Cnidaria</taxon>
        <taxon>Anthozoa</taxon>
        <taxon>Hexacorallia</taxon>
        <taxon>Actiniaria</taxon>
        <taxon>Actiniidae</taxon>
        <taxon>Bunodosoma</taxon>
    </lineage>
</organism>